<comment type="function">
    <text evidence="1">Represses a number of genes involved in the response to DNA damage (SOS response), including recA and lexA. In the presence of single-stranded DNA, RecA interacts with LexA causing an autocatalytic cleavage which disrupts the DNA-binding part of LexA, leading to derepression of the SOS regulon and eventually DNA repair.</text>
</comment>
<comment type="catalytic activity">
    <reaction evidence="1">
        <text>Hydrolysis of Ala-|-Gly bond in repressor LexA.</text>
        <dbReference type="EC" id="3.4.21.88"/>
    </reaction>
</comment>
<comment type="subunit">
    <text evidence="1">Homodimer.</text>
</comment>
<comment type="similarity">
    <text evidence="1">Belongs to the peptidase S24 family.</text>
</comment>
<name>LEXA_BACCN</name>
<proteinExistence type="inferred from homology"/>
<protein>
    <recommendedName>
        <fullName evidence="1">LexA repressor</fullName>
        <ecNumber evidence="1">3.4.21.88</ecNumber>
    </recommendedName>
</protein>
<organism>
    <name type="scientific">Bacillus cytotoxicus (strain DSM 22905 / CIP 110041 / 391-98 / NVH 391-98)</name>
    <dbReference type="NCBI Taxonomy" id="315749"/>
    <lineage>
        <taxon>Bacteria</taxon>
        <taxon>Bacillati</taxon>
        <taxon>Bacillota</taxon>
        <taxon>Bacilli</taxon>
        <taxon>Bacillales</taxon>
        <taxon>Bacillaceae</taxon>
        <taxon>Bacillus</taxon>
        <taxon>Bacillus cereus group</taxon>
    </lineage>
</organism>
<keyword id="KW-0068">Autocatalytic cleavage</keyword>
<keyword id="KW-0227">DNA damage</keyword>
<keyword id="KW-0234">DNA repair</keyword>
<keyword id="KW-0235">DNA replication</keyword>
<keyword id="KW-0238">DNA-binding</keyword>
<keyword id="KW-0378">Hydrolase</keyword>
<keyword id="KW-0678">Repressor</keyword>
<keyword id="KW-0742">SOS response</keyword>
<keyword id="KW-0804">Transcription</keyword>
<keyword id="KW-0805">Transcription regulation</keyword>
<dbReference type="EC" id="3.4.21.88" evidence="1"/>
<dbReference type="EMBL" id="CP000764">
    <property type="protein sequence ID" value="ABS22590.1"/>
    <property type="molecule type" value="Genomic_DNA"/>
</dbReference>
<dbReference type="RefSeq" id="WP_012094786.1">
    <property type="nucleotide sequence ID" value="NC_009674.1"/>
</dbReference>
<dbReference type="SMR" id="A7GR32"/>
<dbReference type="STRING" id="315749.Bcer98_2344"/>
<dbReference type="MEROPS" id="S24.001"/>
<dbReference type="GeneID" id="33897614"/>
<dbReference type="KEGG" id="bcy:Bcer98_2344"/>
<dbReference type="eggNOG" id="COG1974">
    <property type="taxonomic scope" value="Bacteria"/>
</dbReference>
<dbReference type="HOGENOM" id="CLU_066192_45_1_9"/>
<dbReference type="OrthoDB" id="9802364at2"/>
<dbReference type="Proteomes" id="UP000002300">
    <property type="component" value="Chromosome"/>
</dbReference>
<dbReference type="GO" id="GO:0003677">
    <property type="term" value="F:DNA binding"/>
    <property type="evidence" value="ECO:0007669"/>
    <property type="project" value="UniProtKB-UniRule"/>
</dbReference>
<dbReference type="GO" id="GO:0004252">
    <property type="term" value="F:serine-type endopeptidase activity"/>
    <property type="evidence" value="ECO:0007669"/>
    <property type="project" value="UniProtKB-UniRule"/>
</dbReference>
<dbReference type="GO" id="GO:0006281">
    <property type="term" value="P:DNA repair"/>
    <property type="evidence" value="ECO:0007669"/>
    <property type="project" value="UniProtKB-UniRule"/>
</dbReference>
<dbReference type="GO" id="GO:0006260">
    <property type="term" value="P:DNA replication"/>
    <property type="evidence" value="ECO:0007669"/>
    <property type="project" value="UniProtKB-UniRule"/>
</dbReference>
<dbReference type="GO" id="GO:0045892">
    <property type="term" value="P:negative regulation of DNA-templated transcription"/>
    <property type="evidence" value="ECO:0007669"/>
    <property type="project" value="UniProtKB-UniRule"/>
</dbReference>
<dbReference type="GO" id="GO:0006508">
    <property type="term" value="P:proteolysis"/>
    <property type="evidence" value="ECO:0007669"/>
    <property type="project" value="InterPro"/>
</dbReference>
<dbReference type="GO" id="GO:0009432">
    <property type="term" value="P:SOS response"/>
    <property type="evidence" value="ECO:0007669"/>
    <property type="project" value="UniProtKB-UniRule"/>
</dbReference>
<dbReference type="CDD" id="cd00090">
    <property type="entry name" value="HTH_ARSR"/>
    <property type="match status" value="1"/>
</dbReference>
<dbReference type="CDD" id="cd06529">
    <property type="entry name" value="S24_LexA-like"/>
    <property type="match status" value="1"/>
</dbReference>
<dbReference type="FunFam" id="1.10.10.10:FF:000009">
    <property type="entry name" value="LexA repressor"/>
    <property type="match status" value="1"/>
</dbReference>
<dbReference type="FunFam" id="2.10.109.10:FF:000001">
    <property type="entry name" value="LexA repressor"/>
    <property type="match status" value="1"/>
</dbReference>
<dbReference type="Gene3D" id="2.10.109.10">
    <property type="entry name" value="Umud Fragment, subunit A"/>
    <property type="match status" value="1"/>
</dbReference>
<dbReference type="Gene3D" id="1.10.10.10">
    <property type="entry name" value="Winged helix-like DNA-binding domain superfamily/Winged helix DNA-binding domain"/>
    <property type="match status" value="1"/>
</dbReference>
<dbReference type="HAMAP" id="MF_00015">
    <property type="entry name" value="LexA"/>
    <property type="match status" value="1"/>
</dbReference>
<dbReference type="InterPro" id="IPR011991">
    <property type="entry name" value="ArsR-like_HTH"/>
</dbReference>
<dbReference type="InterPro" id="IPR006200">
    <property type="entry name" value="LexA"/>
</dbReference>
<dbReference type="InterPro" id="IPR039418">
    <property type="entry name" value="LexA-like"/>
</dbReference>
<dbReference type="InterPro" id="IPR036286">
    <property type="entry name" value="LexA/Signal_pep-like_sf"/>
</dbReference>
<dbReference type="InterPro" id="IPR006199">
    <property type="entry name" value="LexA_DNA-bd_dom"/>
</dbReference>
<dbReference type="InterPro" id="IPR050077">
    <property type="entry name" value="LexA_repressor"/>
</dbReference>
<dbReference type="InterPro" id="IPR006197">
    <property type="entry name" value="Peptidase_S24_LexA"/>
</dbReference>
<dbReference type="InterPro" id="IPR015927">
    <property type="entry name" value="Peptidase_S24_S26A/B/C"/>
</dbReference>
<dbReference type="InterPro" id="IPR036388">
    <property type="entry name" value="WH-like_DNA-bd_sf"/>
</dbReference>
<dbReference type="InterPro" id="IPR036390">
    <property type="entry name" value="WH_DNA-bd_sf"/>
</dbReference>
<dbReference type="NCBIfam" id="TIGR00498">
    <property type="entry name" value="lexA"/>
    <property type="match status" value="1"/>
</dbReference>
<dbReference type="PANTHER" id="PTHR33516">
    <property type="entry name" value="LEXA REPRESSOR"/>
    <property type="match status" value="1"/>
</dbReference>
<dbReference type="PANTHER" id="PTHR33516:SF2">
    <property type="entry name" value="LEXA REPRESSOR-RELATED"/>
    <property type="match status" value="1"/>
</dbReference>
<dbReference type="Pfam" id="PF01726">
    <property type="entry name" value="LexA_DNA_bind"/>
    <property type="match status" value="1"/>
</dbReference>
<dbReference type="Pfam" id="PF00717">
    <property type="entry name" value="Peptidase_S24"/>
    <property type="match status" value="1"/>
</dbReference>
<dbReference type="PRINTS" id="PR00726">
    <property type="entry name" value="LEXASERPTASE"/>
</dbReference>
<dbReference type="SUPFAM" id="SSF51306">
    <property type="entry name" value="LexA/Signal peptidase"/>
    <property type="match status" value="1"/>
</dbReference>
<dbReference type="SUPFAM" id="SSF46785">
    <property type="entry name" value="Winged helix' DNA-binding domain"/>
    <property type="match status" value="1"/>
</dbReference>
<accession>A7GR32</accession>
<feature type="chain" id="PRO_1000074047" description="LexA repressor">
    <location>
        <begin position="1"/>
        <end position="206"/>
    </location>
</feature>
<feature type="DNA-binding region" description="H-T-H motif" evidence="1">
    <location>
        <begin position="28"/>
        <end position="48"/>
    </location>
</feature>
<feature type="active site" description="For autocatalytic cleavage activity" evidence="1">
    <location>
        <position position="128"/>
    </location>
</feature>
<feature type="active site" description="For autocatalytic cleavage activity" evidence="1">
    <location>
        <position position="166"/>
    </location>
</feature>
<feature type="site" description="Cleavage; by autolysis" evidence="1">
    <location>
        <begin position="92"/>
        <end position="93"/>
    </location>
</feature>
<sequence>MEKLTKRQQDILDFIKLKVQEKGYPPSVREIGQAVGLASSSTVHGHLSRLEEKGYIRRDPTKPRAIEILGEERIEISTQSVVQVPIVGKVTAGLPITAVESVEEHFPLPASIIAGADQVFMLRISGDSMIEAGIFDGDLVVVRQQHSANNGEIVVALTEDNEATVKRFYKEKDHFRLQPENSSLEPIILNTVSVIGKVIGVYRDLH</sequence>
<gene>
    <name evidence="1" type="primary">lexA</name>
    <name type="ordered locus">Bcer98_2344</name>
</gene>
<evidence type="ECO:0000255" key="1">
    <source>
        <dbReference type="HAMAP-Rule" id="MF_00015"/>
    </source>
</evidence>
<reference key="1">
    <citation type="journal article" date="2008" name="Chem. Biol. Interact.">
        <title>Extending the Bacillus cereus group genomics to putative food-borne pathogens of different toxicity.</title>
        <authorList>
            <person name="Lapidus A."/>
            <person name="Goltsman E."/>
            <person name="Auger S."/>
            <person name="Galleron N."/>
            <person name="Segurens B."/>
            <person name="Dossat C."/>
            <person name="Land M.L."/>
            <person name="Broussolle V."/>
            <person name="Brillard J."/>
            <person name="Guinebretiere M.-H."/>
            <person name="Sanchis V."/>
            <person name="Nguen-the C."/>
            <person name="Lereclus D."/>
            <person name="Richardson P."/>
            <person name="Wincker P."/>
            <person name="Weissenbach J."/>
            <person name="Ehrlich S.D."/>
            <person name="Sorokin A."/>
        </authorList>
    </citation>
    <scope>NUCLEOTIDE SEQUENCE [LARGE SCALE GENOMIC DNA]</scope>
    <source>
        <strain>DSM 22905 / CIP 110041 / 391-98 / NVH 391-98</strain>
    </source>
</reference>